<proteinExistence type="evidence at protein level"/>
<feature type="chain" id="PRO_0000420620" description="Carotenoid cleavage oxygenase">
    <location>
        <begin position="1"/>
        <end position="501"/>
    </location>
</feature>
<feature type="binding site" evidence="1">
    <location>
        <position position="162"/>
    </location>
    <ligand>
        <name>Fe cation</name>
        <dbReference type="ChEBI" id="CHEBI:24875"/>
        <note>catalytic</note>
    </ligand>
</feature>
<feature type="binding site" evidence="1">
    <location>
        <position position="211"/>
    </location>
    <ligand>
        <name>Fe cation</name>
        <dbReference type="ChEBI" id="CHEBI:24875"/>
        <note>catalytic</note>
    </ligand>
</feature>
<feature type="binding site" evidence="1">
    <location>
        <position position="314"/>
    </location>
    <ligand>
        <name>Fe cation</name>
        <dbReference type="ChEBI" id="CHEBI:24875"/>
        <note>catalytic</note>
    </ligand>
</feature>
<feature type="binding site" evidence="1">
    <location>
        <position position="494"/>
    </location>
    <ligand>
        <name>Fe cation</name>
        <dbReference type="ChEBI" id="CHEBI:24875"/>
        <note>catalytic</note>
    </ligand>
</feature>
<gene>
    <name type="ordered locus">Rv0654</name>
</gene>
<comment type="function">
    <text evidence="2">Catalyzes the oxidative cleavage of several carotenoids and apocarotenoids in vitro. In contrast to other carotenoid oxygenases, cleaves substrates at two different sites, namely the central C15-C15' and an excentric double bond at the C13-C14 position, leading to retinal (C20), beta-apo-14'-carotenal (C22) and beta-apo-13-carotenone (C18) from beta-carotene (C40), as well as the corresponding hydroxylated products from zeaxanthin and lutein. Converts beta-apo-10'-carotenal (C27) into beta-apo-13-carotenone (C18) and to minor amounts of beta-apo-15-carotenal (retinal; C20) from the cleavage at the C13-C14 and the C15-C15' double bonds, respectively. Can also cleave beta-apo-8'-carotenal, 3-OH-beta-apo-8'-carotenal and 3-OH-beta-apo-10'-carotenal. Does not use as substrates beta-apocarotenoids that have a chain length shorter than C25. Also cleaves lycopene into apo-13-lycopenone (C18) and apo-15'-lycopenal (acycloretinal, C20). Moreover, is able to cleave 3,3'-dihydroxy-isorenieratene representing aromatic carotenoids synthesized by other mycobacteria. Might be involved in the utilization of carotenoids from host cells to produce compounds required for normal growth.</text>
</comment>
<comment type="cofactor">
    <cofactor evidence="1">
        <name>Fe(2+)</name>
        <dbReference type="ChEBI" id="CHEBI:29033"/>
    </cofactor>
    <text evidence="1">Binds 1 Fe(2+) ion per subunit.</text>
</comment>
<comment type="biophysicochemical properties">
    <kinetics>
        <KM evidence="2">4.15 uM for beta-apo-8'-carotenal</KM>
        <KM evidence="2">29.4 uM for beta-apo-10'-carotenal</KM>
        <KM evidence="2">21.9 uM for 3-OH-beta-apo-8'-carotenal</KM>
        <KM evidence="2">43.8 uM for 3-OH-beta-apo-10'-carotenal</KM>
        <text>kcat is 393, 562, 1307 and 764 sec(-1) with beta-apo-8'-carotenal, beta-apo-10'-carotenal, 3-OH-beta-apo-8'-carotenal and 3-OH-beta-apo-10'-carotenal as substrate, respectively.</text>
    </kinetics>
</comment>
<comment type="miscellaneous">
    <text>M.tuberculosis is assumed to be unable to synthesize conventional colored carotenoids, but the data obtained in PubMed:20929460 reveal that M.tuberculosis may utilize carotenoids from host cells and interfere with their retinoid metabolism. The occurrence of suitable carotenoid-substrates (i.e. beta-carotene, lutein, zeaxanthin and lycopene) have been shown in human plasma and tissues, and the apocarotenoid substrate beta-apo-10'-carotenal may also be present in lungs.</text>
</comment>
<comment type="similarity">
    <text evidence="3">Belongs to the carotenoid oxygenase family.</text>
</comment>
<evidence type="ECO:0000250" key="1"/>
<evidence type="ECO:0000269" key="2">
    <source>
    </source>
</evidence>
<evidence type="ECO:0000305" key="3"/>
<protein>
    <recommendedName>
        <fullName>Carotenoid cleavage oxygenase</fullName>
        <shortName>CCO</shortName>
        <ecNumber>1.13.11.-</ecNumber>
    </recommendedName>
    <alternativeName>
        <fullName>Carotenoid 13,14/15,15'-oxygenase</fullName>
    </alternativeName>
</protein>
<reference key="1">
    <citation type="journal article" date="1998" name="Nature">
        <title>Deciphering the biology of Mycobacterium tuberculosis from the complete genome sequence.</title>
        <authorList>
            <person name="Cole S.T."/>
            <person name="Brosch R."/>
            <person name="Parkhill J."/>
            <person name="Garnier T."/>
            <person name="Churcher C.M."/>
            <person name="Harris D.E."/>
            <person name="Gordon S.V."/>
            <person name="Eiglmeier K."/>
            <person name="Gas S."/>
            <person name="Barry C.E. III"/>
            <person name="Tekaia F."/>
            <person name="Badcock K."/>
            <person name="Basham D."/>
            <person name="Brown D."/>
            <person name="Chillingworth T."/>
            <person name="Connor R."/>
            <person name="Davies R.M."/>
            <person name="Devlin K."/>
            <person name="Feltwell T."/>
            <person name="Gentles S."/>
            <person name="Hamlin N."/>
            <person name="Holroyd S."/>
            <person name="Hornsby T."/>
            <person name="Jagels K."/>
            <person name="Krogh A."/>
            <person name="McLean J."/>
            <person name="Moule S."/>
            <person name="Murphy L.D."/>
            <person name="Oliver S."/>
            <person name="Osborne J."/>
            <person name="Quail M.A."/>
            <person name="Rajandream M.A."/>
            <person name="Rogers J."/>
            <person name="Rutter S."/>
            <person name="Seeger K."/>
            <person name="Skelton S."/>
            <person name="Squares S."/>
            <person name="Squares R."/>
            <person name="Sulston J.E."/>
            <person name="Taylor K."/>
            <person name="Whitehead S."/>
            <person name="Barrell B.G."/>
        </authorList>
    </citation>
    <scope>NUCLEOTIDE SEQUENCE [LARGE SCALE GENOMIC DNA]</scope>
    <source>
        <strain>ATCC 25618 / H37Rv</strain>
    </source>
</reference>
<reference key="2">
    <citation type="journal article" date="2010" name="FEBS J.">
        <title>The Mycobacterium tuberculosis ORF Rv0654 encodes a carotenoid oxygenase mediating central and excentric cleavage of conventional and aromatic carotenoids.</title>
        <authorList>
            <person name="Scherzinger D."/>
            <person name="Scheffer E."/>
            <person name="Bar C."/>
            <person name="Ernst H."/>
            <person name="Al-Babili S."/>
        </authorList>
    </citation>
    <scope>FUNCTION</scope>
    <scope>CATALYTIC ACTIVITY</scope>
    <scope>SUBSTRATE SPECIFICITY</scope>
    <scope>KINETIC PARAMETERS</scope>
</reference>
<reference key="3">
    <citation type="journal article" date="2011" name="Mol. Cell. Proteomics">
        <title>Proteogenomic analysis of Mycobacterium tuberculosis by high resolution mass spectrometry.</title>
        <authorList>
            <person name="Kelkar D.S."/>
            <person name="Kumar D."/>
            <person name="Kumar P."/>
            <person name="Balakrishnan L."/>
            <person name="Muthusamy B."/>
            <person name="Yadav A.K."/>
            <person name="Shrivastava P."/>
            <person name="Marimuthu A."/>
            <person name="Anand S."/>
            <person name="Sundaram H."/>
            <person name="Kingsbury R."/>
            <person name="Harsha H.C."/>
            <person name="Nair B."/>
            <person name="Prasad T.S."/>
            <person name="Chauhan D.S."/>
            <person name="Katoch K."/>
            <person name="Katoch V.M."/>
            <person name="Kumar P."/>
            <person name="Chaerkady R."/>
            <person name="Ramachandran S."/>
            <person name="Dash D."/>
            <person name="Pandey A."/>
        </authorList>
    </citation>
    <scope>IDENTIFICATION BY MASS SPECTROMETRY [LARGE SCALE ANALYSIS]</scope>
    <source>
        <strain>ATCC 25618 / H37Rv</strain>
    </source>
</reference>
<sequence>MTTAQAAESQNPYLEGFLAPVSTEVTATDLPVTGRIPEHLDGRYLRNGPNPVAEVDPATYHWFTGDAMVHGVALRDGKARWYRNRWVRTPAVCAALGEPISARPHPRTGIIEGGPNTNVLTHAGRTLALVEAGVVNYELTDELDTVGPCDFDGTLHGGYTAHPQRDPHTGELHAVSYSFARGHRVQYSVIGTDGHARRTVDIEVAGSPMMHSFSLTDNYVVIYDLPVTFDPMQVVPASVPRWLQRPARLVIQSVLGRVRIPDPIAALGNRMQGHSDRLPYAWNPSYPARVGVMPREGGNEDVRWFDIEPCYVYHPLNAYSECRNGAEVLVLDVVRYSRMFDRDRRGPGGDSRPSLDRWTINLATGAVTAECRDDRAQEFPRINETLVGGPHRFAYTVGIEGGFLVGAGAALSTPLYKQDCVTGSSTVASLDPDLLIGEMVFVPNPSARAEDDGILMGYGWHRGRDEGQLLLLDAQTLESIATVHLPQRVPMGFHGNWAPTT</sequence>
<accession>P9WPR5</accession>
<accession>F2GNJ3</accession>
<accession>L0T7C1</accession>
<accession>O06785</accession>
<accession>Q7D9H3</accession>
<name>CCO_MYCTU</name>
<dbReference type="EC" id="1.13.11.-"/>
<dbReference type="EMBL" id="AL123456">
    <property type="protein sequence ID" value="CCP43397.1"/>
    <property type="molecule type" value="Genomic_DNA"/>
</dbReference>
<dbReference type="PIR" id="A70534">
    <property type="entry name" value="A70534"/>
</dbReference>
<dbReference type="RefSeq" id="NP_215168.1">
    <property type="nucleotide sequence ID" value="NC_000962.3"/>
</dbReference>
<dbReference type="RefSeq" id="WP_003403360.1">
    <property type="nucleotide sequence ID" value="NZ_NVQJ01000007.1"/>
</dbReference>
<dbReference type="SMR" id="P9WPR5"/>
<dbReference type="FunCoup" id="P9WPR5">
    <property type="interactions" value="8"/>
</dbReference>
<dbReference type="STRING" id="83332.Rv0654"/>
<dbReference type="PaxDb" id="83332-Rv0654"/>
<dbReference type="DNASU" id="888089"/>
<dbReference type="GeneID" id="888089"/>
<dbReference type="KEGG" id="mtu:Rv0654"/>
<dbReference type="KEGG" id="mtv:RVBD_0654"/>
<dbReference type="TubercuList" id="Rv0654"/>
<dbReference type="eggNOG" id="COG3670">
    <property type="taxonomic scope" value="Bacteria"/>
</dbReference>
<dbReference type="InParanoid" id="P9WPR5"/>
<dbReference type="OrthoDB" id="6636843at2"/>
<dbReference type="PhylomeDB" id="P9WPR5"/>
<dbReference type="BRENDA" id="1.13.11.65">
    <property type="organism ID" value="3445"/>
</dbReference>
<dbReference type="BRENDA" id="1.13.11.75">
    <property type="organism ID" value="3445"/>
</dbReference>
<dbReference type="Proteomes" id="UP000001584">
    <property type="component" value="Chromosome"/>
</dbReference>
<dbReference type="GO" id="GO:0010436">
    <property type="term" value="F:carotenoid dioxygenase activity"/>
    <property type="evidence" value="ECO:0000314"/>
    <property type="project" value="MTBBASE"/>
</dbReference>
<dbReference type="GO" id="GO:0046872">
    <property type="term" value="F:metal ion binding"/>
    <property type="evidence" value="ECO:0007669"/>
    <property type="project" value="UniProtKB-KW"/>
</dbReference>
<dbReference type="GO" id="GO:0016121">
    <property type="term" value="P:carotene catabolic process"/>
    <property type="evidence" value="ECO:0000318"/>
    <property type="project" value="GO_Central"/>
</dbReference>
<dbReference type="GO" id="GO:0016118">
    <property type="term" value="P:carotenoid catabolic process"/>
    <property type="evidence" value="ECO:0000314"/>
    <property type="project" value="MTBBASE"/>
</dbReference>
<dbReference type="InterPro" id="IPR004294">
    <property type="entry name" value="Carotenoid_Oase"/>
</dbReference>
<dbReference type="PANTHER" id="PTHR10543">
    <property type="entry name" value="BETA-CAROTENE DIOXYGENASE"/>
    <property type="match status" value="1"/>
</dbReference>
<dbReference type="PANTHER" id="PTHR10543:SF89">
    <property type="entry name" value="CAROTENOID 9,10(9',10')-CLEAVAGE DIOXYGENASE 1"/>
    <property type="match status" value="1"/>
</dbReference>
<dbReference type="Pfam" id="PF03055">
    <property type="entry name" value="RPE65"/>
    <property type="match status" value="1"/>
</dbReference>
<keyword id="KW-0223">Dioxygenase</keyword>
<keyword id="KW-0408">Iron</keyword>
<keyword id="KW-0479">Metal-binding</keyword>
<keyword id="KW-0560">Oxidoreductase</keyword>
<keyword id="KW-1185">Reference proteome</keyword>
<organism>
    <name type="scientific">Mycobacterium tuberculosis (strain ATCC 25618 / H37Rv)</name>
    <dbReference type="NCBI Taxonomy" id="83332"/>
    <lineage>
        <taxon>Bacteria</taxon>
        <taxon>Bacillati</taxon>
        <taxon>Actinomycetota</taxon>
        <taxon>Actinomycetes</taxon>
        <taxon>Mycobacteriales</taxon>
        <taxon>Mycobacteriaceae</taxon>
        <taxon>Mycobacterium</taxon>
        <taxon>Mycobacterium tuberculosis complex</taxon>
    </lineage>
</organism>